<proteinExistence type="inferred from homology"/>
<evidence type="ECO:0000255" key="1">
    <source>
        <dbReference type="HAMAP-Rule" id="MF_00531"/>
    </source>
</evidence>
<evidence type="ECO:0000305" key="2"/>
<comment type="function">
    <text evidence="1">Protein S19 forms a complex with S13 that binds strongly to the 16S ribosomal RNA.</text>
</comment>
<comment type="similarity">
    <text evidence="1">Belongs to the universal ribosomal protein uS19 family.</text>
</comment>
<protein>
    <recommendedName>
        <fullName evidence="1">Small ribosomal subunit protein uS19</fullName>
    </recommendedName>
    <alternativeName>
        <fullName evidence="2">30S ribosomal protein S19</fullName>
    </alternativeName>
</protein>
<keyword id="KW-0687">Ribonucleoprotein</keyword>
<keyword id="KW-0689">Ribosomal protein</keyword>
<keyword id="KW-0694">RNA-binding</keyword>
<keyword id="KW-0699">rRNA-binding</keyword>
<organism>
    <name type="scientific">Bacillus cereus (strain AH187)</name>
    <dbReference type="NCBI Taxonomy" id="405534"/>
    <lineage>
        <taxon>Bacteria</taxon>
        <taxon>Bacillati</taxon>
        <taxon>Bacillota</taxon>
        <taxon>Bacilli</taxon>
        <taxon>Bacillales</taxon>
        <taxon>Bacillaceae</taxon>
        <taxon>Bacillus</taxon>
        <taxon>Bacillus cereus group</taxon>
    </lineage>
</organism>
<name>RS19_BACC7</name>
<reference key="1">
    <citation type="submission" date="2008-10" db="EMBL/GenBank/DDBJ databases">
        <title>Genome sequence of Bacillus cereus AH187.</title>
        <authorList>
            <person name="Dodson R.J."/>
            <person name="Durkin A.S."/>
            <person name="Rosovitz M.J."/>
            <person name="Rasko D.A."/>
            <person name="Kolsto A.B."/>
            <person name="Okstad O.A."/>
            <person name="Ravel J."/>
            <person name="Sutton G."/>
        </authorList>
    </citation>
    <scope>NUCLEOTIDE SEQUENCE [LARGE SCALE GENOMIC DNA]</scope>
    <source>
        <strain>AH187</strain>
    </source>
</reference>
<feature type="chain" id="PRO_1000127928" description="Small ribosomal subunit protein uS19">
    <location>
        <begin position="1"/>
        <end position="92"/>
    </location>
</feature>
<sequence length="92" mass="10627">MARSLKKGPFVDDHLMSKIAKLNETEQKQVVKTWSRRSTIFPQFIGHTIAVYDGRKHVPVYVTEDMVGHKLGEFAPTRTYKGHDADDKKTRR</sequence>
<accession>B7HQU8</accession>
<gene>
    <name evidence="1" type="primary">rpsS</name>
    <name type="ordered locus">BCAH187_A0145</name>
</gene>
<dbReference type="EMBL" id="CP001177">
    <property type="protein sequence ID" value="ACJ78355.1"/>
    <property type="molecule type" value="Genomic_DNA"/>
</dbReference>
<dbReference type="SMR" id="B7HQU8"/>
<dbReference type="KEGG" id="bcr:BCAH187_A0145"/>
<dbReference type="HOGENOM" id="CLU_144911_0_1_9"/>
<dbReference type="Proteomes" id="UP000002214">
    <property type="component" value="Chromosome"/>
</dbReference>
<dbReference type="GO" id="GO:0005737">
    <property type="term" value="C:cytoplasm"/>
    <property type="evidence" value="ECO:0007669"/>
    <property type="project" value="UniProtKB-ARBA"/>
</dbReference>
<dbReference type="GO" id="GO:0015935">
    <property type="term" value="C:small ribosomal subunit"/>
    <property type="evidence" value="ECO:0007669"/>
    <property type="project" value="InterPro"/>
</dbReference>
<dbReference type="GO" id="GO:0019843">
    <property type="term" value="F:rRNA binding"/>
    <property type="evidence" value="ECO:0007669"/>
    <property type="project" value="UniProtKB-UniRule"/>
</dbReference>
<dbReference type="GO" id="GO:0003735">
    <property type="term" value="F:structural constituent of ribosome"/>
    <property type="evidence" value="ECO:0007669"/>
    <property type="project" value="InterPro"/>
</dbReference>
<dbReference type="GO" id="GO:0000028">
    <property type="term" value="P:ribosomal small subunit assembly"/>
    <property type="evidence" value="ECO:0007669"/>
    <property type="project" value="TreeGrafter"/>
</dbReference>
<dbReference type="GO" id="GO:0006412">
    <property type="term" value="P:translation"/>
    <property type="evidence" value="ECO:0007669"/>
    <property type="project" value="UniProtKB-UniRule"/>
</dbReference>
<dbReference type="FunFam" id="3.30.860.10:FF:000001">
    <property type="entry name" value="30S ribosomal protein S19"/>
    <property type="match status" value="1"/>
</dbReference>
<dbReference type="Gene3D" id="3.30.860.10">
    <property type="entry name" value="30s Ribosomal Protein S19, Chain A"/>
    <property type="match status" value="1"/>
</dbReference>
<dbReference type="HAMAP" id="MF_00531">
    <property type="entry name" value="Ribosomal_uS19"/>
    <property type="match status" value="1"/>
</dbReference>
<dbReference type="InterPro" id="IPR002222">
    <property type="entry name" value="Ribosomal_uS19"/>
</dbReference>
<dbReference type="InterPro" id="IPR005732">
    <property type="entry name" value="Ribosomal_uS19_bac-type"/>
</dbReference>
<dbReference type="InterPro" id="IPR020934">
    <property type="entry name" value="Ribosomal_uS19_CS"/>
</dbReference>
<dbReference type="InterPro" id="IPR023575">
    <property type="entry name" value="Ribosomal_uS19_SF"/>
</dbReference>
<dbReference type="NCBIfam" id="TIGR01050">
    <property type="entry name" value="rpsS_bact"/>
    <property type="match status" value="1"/>
</dbReference>
<dbReference type="PANTHER" id="PTHR11880">
    <property type="entry name" value="RIBOSOMAL PROTEIN S19P FAMILY MEMBER"/>
    <property type="match status" value="1"/>
</dbReference>
<dbReference type="PANTHER" id="PTHR11880:SF8">
    <property type="entry name" value="SMALL RIBOSOMAL SUBUNIT PROTEIN US19M"/>
    <property type="match status" value="1"/>
</dbReference>
<dbReference type="Pfam" id="PF00203">
    <property type="entry name" value="Ribosomal_S19"/>
    <property type="match status" value="1"/>
</dbReference>
<dbReference type="PIRSF" id="PIRSF002144">
    <property type="entry name" value="Ribosomal_S19"/>
    <property type="match status" value="1"/>
</dbReference>
<dbReference type="PRINTS" id="PR00975">
    <property type="entry name" value="RIBOSOMALS19"/>
</dbReference>
<dbReference type="SUPFAM" id="SSF54570">
    <property type="entry name" value="Ribosomal protein S19"/>
    <property type="match status" value="1"/>
</dbReference>
<dbReference type="PROSITE" id="PS00323">
    <property type="entry name" value="RIBOSOMAL_S19"/>
    <property type="match status" value="1"/>
</dbReference>